<comment type="subcellular location">
    <subcellularLocation>
        <location evidence="1">Virion</location>
    </subcellularLocation>
</comment>
<comment type="induction">
    <text evidence="2">Expressed in the late phase of the viral replicative cycle.</text>
</comment>
<comment type="similarity">
    <text evidence="3">Belongs to the asfivirus C717R family.</text>
</comment>
<organism>
    <name type="scientific">African swine fever virus (strain Badajoz 1971 Vero-adapted)</name>
    <name type="common">Ba71V</name>
    <name type="synonym">ASFV</name>
    <dbReference type="NCBI Taxonomy" id="10498"/>
    <lineage>
        <taxon>Viruses</taxon>
        <taxon>Varidnaviria</taxon>
        <taxon>Bamfordvirae</taxon>
        <taxon>Nucleocytoviricota</taxon>
        <taxon>Pokkesviricetes</taxon>
        <taxon>Asfuvirales</taxon>
        <taxon>Asfarviridae</taxon>
        <taxon>Asfivirus</taxon>
        <taxon>African swine fever virus</taxon>
    </lineage>
</organism>
<keyword id="KW-0426">Late protein</keyword>
<keyword id="KW-1185">Reference proteome</keyword>
<keyword id="KW-0946">Virion</keyword>
<proteinExistence type="evidence at transcript level"/>
<reference key="1">
    <citation type="journal article" date="1995" name="Virology">
        <title>Analysis of the complete nucleotide sequence of African swine fever virus.</title>
        <authorList>
            <person name="Yanez R.J."/>
            <person name="Rodriguez J.M."/>
            <person name="Nogal M.L."/>
            <person name="Yuste L."/>
            <person name="Enriquez C."/>
            <person name="Rodriguez J.F."/>
            <person name="Vinuela E."/>
        </authorList>
    </citation>
    <scope>NUCLEOTIDE SEQUENCE [LARGE SCALE GENOMIC DNA]</scope>
</reference>
<reference key="2">
    <citation type="journal article" date="2018" name="J. Virol.">
        <title>A Proteomic Atlas of the African Swine Fever Virus Particle.</title>
        <authorList>
            <person name="Alejo A."/>
            <person name="Matamoros T."/>
            <person name="Guerra M."/>
            <person name="Andres G."/>
        </authorList>
    </citation>
    <scope>SUBCELLULAR LOCATION</scope>
</reference>
<reference key="3">
    <citation type="journal article" date="2020" name="J. Virol.">
        <title>The African Swine Fever Virus Transcriptome.</title>
        <authorList>
            <person name="Cackett G."/>
            <person name="Matelska D."/>
            <person name="Sykora M."/>
            <person name="Portugal R."/>
            <person name="Malecki M."/>
            <person name="Baehler J."/>
            <person name="Dixon L."/>
            <person name="Werner F."/>
        </authorList>
    </citation>
    <scope>INDUCTION</scope>
</reference>
<organismHost>
    <name type="scientific">Ornithodoros</name>
    <name type="common">relapsing fever ticks</name>
    <dbReference type="NCBI Taxonomy" id="6937"/>
</organismHost>
<organismHost>
    <name type="scientific">Sus scrofa</name>
    <name type="common">Pig</name>
    <dbReference type="NCBI Taxonomy" id="9823"/>
</organismHost>
<sequence length="717" mass="83690">MTKLAQWMFEQYVKDLNLKNRGSPSFRKWLTLQPSLLRYSGVMRANAFDILKYGYPMQQSGYTVATLEIHFKNIRSSFANIYWNRDSEEPEYVCCCATYQSHDGEYRYRFVWYQPFIEAYNAIEAALDPLETIILNLIAARDLDFVVHIFPYNKGHEDYLASTQLILKIFIATLLMDILRIKDNTLDVHLNSDYIIVMERLWPHIKDAIEHFFEAHKDLLGYLIAFRNGGNFAGSLRPSCGQKIVPLTIREVLQMNDINLAVWREVFIMQECSDLVINGIAPCFPIFNTWTYLQGINQIFFENTSLQEKFKKDFIARELSKEIIKGQKTLNDKEFKKLSLHQIQYMESFLLMSDVAIMITTEYVGYTLQSLPGIISRSSYLSPIVKNILMDEDSFMSLLFDLCYGAYVLHKKENVIHADLHLNNMTYYHFNPTSFTDRNKPGKYTLKVKNPVIAFITGPKVETETYVFKHIDGFGCIIDFSRAIMGPNHAIKLERQYGLAFVNTFYRNQSEHILKVLRYYFPEMLTNRENEIQGVILSNFNFFFNSITAIDFYAIARNLRSMLSLDYLHTSEVKRNVEISQTFLDTCQFLEEKAVEFLFKNLHTVLSGKPVEKTAGDVLLPIVFKKFLYPNIPKNILRSFTVIDVYNYNNIKRYSGKAIQTFPPWAQTKEILTHAEGRTFEDIFPRGELVFKKAYAENNHLDKILQRIREQLANENL</sequence>
<protein>
    <recommendedName>
        <fullName>Uncharacterized protein C717R</fullName>
        <shortName>pC717R</shortName>
    </recommendedName>
</protein>
<gene>
    <name type="ordered locus">Ba71V-064</name>
    <name type="ORF">C717R</name>
</gene>
<dbReference type="EMBL" id="U18466">
    <property type="protein sequence ID" value="AAA65294.1"/>
    <property type="molecule type" value="Genomic_DNA"/>
</dbReference>
<dbReference type="RefSeq" id="NP_042758.1">
    <property type="nucleotide sequence ID" value="NC_001659.2"/>
</dbReference>
<dbReference type="GeneID" id="22220294"/>
<dbReference type="KEGG" id="vg:22220294"/>
<dbReference type="Proteomes" id="UP000000624">
    <property type="component" value="Segment"/>
</dbReference>
<dbReference type="GO" id="GO:0044423">
    <property type="term" value="C:virion component"/>
    <property type="evidence" value="ECO:0007669"/>
    <property type="project" value="UniProtKB-KW"/>
</dbReference>
<dbReference type="InterPro" id="IPR011009">
    <property type="entry name" value="Kinase-like_dom_sf"/>
</dbReference>
<dbReference type="SUPFAM" id="SSF56112">
    <property type="entry name" value="Protein kinase-like (PK-like)"/>
    <property type="match status" value="1"/>
</dbReference>
<accession>Q65156</accession>
<name>VF717_ASFB7</name>
<feature type="chain" id="PRO_0000373720" description="Uncharacterized protein C717R">
    <location>
        <begin position="1"/>
        <end position="717"/>
    </location>
</feature>
<evidence type="ECO:0000269" key="1">
    <source>
    </source>
</evidence>
<evidence type="ECO:0000269" key="2">
    <source>
    </source>
</evidence>
<evidence type="ECO:0000305" key="3"/>